<dbReference type="EMBL" id="CP000478">
    <property type="protein sequence ID" value="ABK17443.1"/>
    <property type="molecule type" value="Genomic_DNA"/>
</dbReference>
<dbReference type="RefSeq" id="WP_011698613.1">
    <property type="nucleotide sequence ID" value="NC_008554.1"/>
</dbReference>
<dbReference type="SMR" id="A0LJ41"/>
<dbReference type="FunCoup" id="A0LJ41">
    <property type="interactions" value="621"/>
</dbReference>
<dbReference type="STRING" id="335543.Sfum_1756"/>
<dbReference type="KEGG" id="sfu:Sfum_1756"/>
<dbReference type="eggNOG" id="COG0484">
    <property type="taxonomic scope" value="Bacteria"/>
</dbReference>
<dbReference type="HOGENOM" id="CLU_017633_0_7_7"/>
<dbReference type="InParanoid" id="A0LJ41"/>
<dbReference type="OrthoDB" id="9779889at2"/>
<dbReference type="Proteomes" id="UP000001784">
    <property type="component" value="Chromosome"/>
</dbReference>
<dbReference type="GO" id="GO:0005737">
    <property type="term" value="C:cytoplasm"/>
    <property type="evidence" value="ECO:0007669"/>
    <property type="project" value="UniProtKB-SubCell"/>
</dbReference>
<dbReference type="GO" id="GO:0005524">
    <property type="term" value="F:ATP binding"/>
    <property type="evidence" value="ECO:0007669"/>
    <property type="project" value="InterPro"/>
</dbReference>
<dbReference type="GO" id="GO:0031072">
    <property type="term" value="F:heat shock protein binding"/>
    <property type="evidence" value="ECO:0007669"/>
    <property type="project" value="InterPro"/>
</dbReference>
<dbReference type="GO" id="GO:0051082">
    <property type="term" value="F:unfolded protein binding"/>
    <property type="evidence" value="ECO:0007669"/>
    <property type="project" value="UniProtKB-UniRule"/>
</dbReference>
<dbReference type="GO" id="GO:0008270">
    <property type="term" value="F:zinc ion binding"/>
    <property type="evidence" value="ECO:0007669"/>
    <property type="project" value="UniProtKB-UniRule"/>
</dbReference>
<dbReference type="GO" id="GO:0051085">
    <property type="term" value="P:chaperone cofactor-dependent protein refolding"/>
    <property type="evidence" value="ECO:0007669"/>
    <property type="project" value="TreeGrafter"/>
</dbReference>
<dbReference type="GO" id="GO:0006260">
    <property type="term" value="P:DNA replication"/>
    <property type="evidence" value="ECO:0007669"/>
    <property type="project" value="UniProtKB-KW"/>
</dbReference>
<dbReference type="GO" id="GO:0042026">
    <property type="term" value="P:protein refolding"/>
    <property type="evidence" value="ECO:0007669"/>
    <property type="project" value="TreeGrafter"/>
</dbReference>
<dbReference type="GO" id="GO:0009408">
    <property type="term" value="P:response to heat"/>
    <property type="evidence" value="ECO:0007669"/>
    <property type="project" value="InterPro"/>
</dbReference>
<dbReference type="CDD" id="cd06257">
    <property type="entry name" value="DnaJ"/>
    <property type="match status" value="1"/>
</dbReference>
<dbReference type="CDD" id="cd10747">
    <property type="entry name" value="DnaJ_C"/>
    <property type="match status" value="1"/>
</dbReference>
<dbReference type="CDD" id="cd10719">
    <property type="entry name" value="DnaJ_zf"/>
    <property type="match status" value="1"/>
</dbReference>
<dbReference type="FunFam" id="1.10.287.110:FF:000034">
    <property type="entry name" value="Chaperone protein DnaJ"/>
    <property type="match status" value="1"/>
</dbReference>
<dbReference type="FunFam" id="2.10.230.10:FF:000002">
    <property type="entry name" value="Molecular chaperone DnaJ"/>
    <property type="match status" value="1"/>
</dbReference>
<dbReference type="FunFam" id="2.60.260.20:FF:000004">
    <property type="entry name" value="Molecular chaperone DnaJ"/>
    <property type="match status" value="1"/>
</dbReference>
<dbReference type="Gene3D" id="1.10.287.110">
    <property type="entry name" value="DnaJ domain"/>
    <property type="match status" value="1"/>
</dbReference>
<dbReference type="Gene3D" id="2.10.230.10">
    <property type="entry name" value="Heat shock protein DnaJ, cysteine-rich domain"/>
    <property type="match status" value="1"/>
</dbReference>
<dbReference type="Gene3D" id="2.60.260.20">
    <property type="entry name" value="Urease metallochaperone UreE, N-terminal domain"/>
    <property type="match status" value="2"/>
</dbReference>
<dbReference type="HAMAP" id="MF_01152">
    <property type="entry name" value="DnaJ"/>
    <property type="match status" value="1"/>
</dbReference>
<dbReference type="InterPro" id="IPR012724">
    <property type="entry name" value="DnaJ"/>
</dbReference>
<dbReference type="InterPro" id="IPR002939">
    <property type="entry name" value="DnaJ_C"/>
</dbReference>
<dbReference type="InterPro" id="IPR001623">
    <property type="entry name" value="DnaJ_domain"/>
</dbReference>
<dbReference type="InterPro" id="IPR018253">
    <property type="entry name" value="DnaJ_domain_CS"/>
</dbReference>
<dbReference type="InterPro" id="IPR008971">
    <property type="entry name" value="HSP40/DnaJ_pept-bd"/>
</dbReference>
<dbReference type="InterPro" id="IPR001305">
    <property type="entry name" value="HSP_DnaJ_Cys-rich_dom"/>
</dbReference>
<dbReference type="InterPro" id="IPR036410">
    <property type="entry name" value="HSP_DnaJ_Cys-rich_dom_sf"/>
</dbReference>
<dbReference type="InterPro" id="IPR036869">
    <property type="entry name" value="J_dom_sf"/>
</dbReference>
<dbReference type="NCBIfam" id="TIGR02349">
    <property type="entry name" value="DnaJ_bact"/>
    <property type="match status" value="1"/>
</dbReference>
<dbReference type="NCBIfam" id="NF008035">
    <property type="entry name" value="PRK10767.1"/>
    <property type="match status" value="1"/>
</dbReference>
<dbReference type="NCBIfam" id="NF010887">
    <property type="entry name" value="PRK14294.1"/>
    <property type="match status" value="1"/>
</dbReference>
<dbReference type="PANTHER" id="PTHR43096:SF10">
    <property type="entry name" value="CHAPERONE PROTEIN DNAJ A6, CHLOROPLASTIC"/>
    <property type="match status" value="1"/>
</dbReference>
<dbReference type="PANTHER" id="PTHR43096">
    <property type="entry name" value="DNAJ HOMOLOG 1, MITOCHONDRIAL-RELATED"/>
    <property type="match status" value="1"/>
</dbReference>
<dbReference type="Pfam" id="PF00226">
    <property type="entry name" value="DnaJ"/>
    <property type="match status" value="1"/>
</dbReference>
<dbReference type="Pfam" id="PF01556">
    <property type="entry name" value="DnaJ_C"/>
    <property type="match status" value="1"/>
</dbReference>
<dbReference type="Pfam" id="PF00684">
    <property type="entry name" value="DnaJ_CXXCXGXG"/>
    <property type="match status" value="1"/>
</dbReference>
<dbReference type="PRINTS" id="PR00625">
    <property type="entry name" value="JDOMAIN"/>
</dbReference>
<dbReference type="SMART" id="SM00271">
    <property type="entry name" value="DnaJ"/>
    <property type="match status" value="1"/>
</dbReference>
<dbReference type="SUPFAM" id="SSF46565">
    <property type="entry name" value="Chaperone J-domain"/>
    <property type="match status" value="1"/>
</dbReference>
<dbReference type="SUPFAM" id="SSF57938">
    <property type="entry name" value="DnaJ/Hsp40 cysteine-rich domain"/>
    <property type="match status" value="1"/>
</dbReference>
<dbReference type="SUPFAM" id="SSF49493">
    <property type="entry name" value="HSP40/DnaJ peptide-binding domain"/>
    <property type="match status" value="2"/>
</dbReference>
<dbReference type="PROSITE" id="PS00636">
    <property type="entry name" value="DNAJ_1"/>
    <property type="match status" value="1"/>
</dbReference>
<dbReference type="PROSITE" id="PS50076">
    <property type="entry name" value="DNAJ_2"/>
    <property type="match status" value="1"/>
</dbReference>
<dbReference type="PROSITE" id="PS51188">
    <property type="entry name" value="ZF_CR"/>
    <property type="match status" value="1"/>
</dbReference>
<sequence length="384" mass="42927">MGKRDYYEILGVTRQASEEEIKKAYRKLALKYHPDRNPGDKDSEELFKEAAEAYEVLHDAQKKRIYDTYGHEGLRGTGFSGFRGFEDIFSSFGDVFQEFFNFGFGAGGQSRTAARPGDDLLYDLSLTFEEAVFGTEKEIRLQTLTTCEECNGSGAEPGTRETVCPVCQGSGQVVQSQGFFRISATCTRCQGMGKVLVSPCKTCNGQGRTRQSKTVQVRVPAGVDTGTRLRLRGEGESGYRGGVAGDLYVRLHVNPHEFFERDGDNLYCKVSVSFAQAILGDQIEIPTLDGGRELKIQPGTQPGAVIRFSGEGVPRLRGYGRGDLFIEVEVKIPTRITPRQEEIVTEFMQIEKEKSGEKVRKWPWSKRKDREKKSMAESTREART</sequence>
<comment type="function">
    <text evidence="1">Participates actively in the response to hyperosmotic and heat shock by preventing the aggregation of stress-denatured proteins and by disaggregating proteins, also in an autonomous, DnaK-independent fashion. Unfolded proteins bind initially to DnaJ; upon interaction with the DnaJ-bound protein, DnaK hydrolyzes its bound ATP, resulting in the formation of a stable complex. GrpE releases ADP from DnaK; ATP binding to DnaK triggers the release of the substrate protein, thus completing the reaction cycle. Several rounds of ATP-dependent interactions between DnaJ, DnaK and GrpE are required for fully efficient folding. Also involved, together with DnaK and GrpE, in the DNA replication of plasmids through activation of initiation proteins.</text>
</comment>
<comment type="cofactor">
    <cofactor evidence="1">
        <name>Zn(2+)</name>
        <dbReference type="ChEBI" id="CHEBI:29105"/>
    </cofactor>
    <text evidence="1">Binds 2 Zn(2+) ions per monomer.</text>
</comment>
<comment type="subunit">
    <text evidence="1">Homodimer.</text>
</comment>
<comment type="subcellular location">
    <subcellularLocation>
        <location evidence="1">Cytoplasm</location>
    </subcellularLocation>
</comment>
<comment type="domain">
    <text evidence="1">The J domain is necessary and sufficient to stimulate DnaK ATPase activity. Zinc center 1 plays an important role in the autonomous, DnaK-independent chaperone activity of DnaJ. Zinc center 2 is essential for interaction with DnaK and for DnaJ activity.</text>
</comment>
<comment type="similarity">
    <text evidence="1">Belongs to the DnaJ family.</text>
</comment>
<evidence type="ECO:0000255" key="1">
    <source>
        <dbReference type="HAMAP-Rule" id="MF_01152"/>
    </source>
</evidence>
<evidence type="ECO:0000256" key="2">
    <source>
        <dbReference type="SAM" id="MobiDB-lite"/>
    </source>
</evidence>
<protein>
    <recommendedName>
        <fullName evidence="1">Chaperone protein DnaJ</fullName>
    </recommendedName>
</protein>
<reference key="1">
    <citation type="submission" date="2006-10" db="EMBL/GenBank/DDBJ databases">
        <title>Complete sequence of Syntrophobacter fumaroxidans MPOB.</title>
        <authorList>
            <consortium name="US DOE Joint Genome Institute"/>
            <person name="Copeland A."/>
            <person name="Lucas S."/>
            <person name="Lapidus A."/>
            <person name="Barry K."/>
            <person name="Detter J.C."/>
            <person name="Glavina del Rio T."/>
            <person name="Hammon N."/>
            <person name="Israni S."/>
            <person name="Pitluck S."/>
            <person name="Goltsman E.G."/>
            <person name="Martinez M."/>
            <person name="Schmutz J."/>
            <person name="Larimer F."/>
            <person name="Land M."/>
            <person name="Hauser L."/>
            <person name="Kyrpides N."/>
            <person name="Kim E."/>
            <person name="Boone D.R."/>
            <person name="Brockman F."/>
            <person name="Culley D."/>
            <person name="Ferry J."/>
            <person name="Gunsalus R."/>
            <person name="McInerney M.J."/>
            <person name="Morrison M."/>
            <person name="Plugge C."/>
            <person name="Rohlin L."/>
            <person name="Scholten J."/>
            <person name="Sieber J."/>
            <person name="Stams A.J.M."/>
            <person name="Worm P."/>
            <person name="Henstra A.M."/>
            <person name="Richardson P."/>
        </authorList>
    </citation>
    <scope>NUCLEOTIDE SEQUENCE [LARGE SCALE GENOMIC DNA]</scope>
    <source>
        <strain>DSM 10017 / MPOB</strain>
    </source>
</reference>
<organism>
    <name type="scientific">Syntrophobacter fumaroxidans (strain DSM 10017 / MPOB)</name>
    <dbReference type="NCBI Taxonomy" id="335543"/>
    <lineage>
        <taxon>Bacteria</taxon>
        <taxon>Pseudomonadati</taxon>
        <taxon>Thermodesulfobacteriota</taxon>
        <taxon>Syntrophobacteria</taxon>
        <taxon>Syntrophobacterales</taxon>
        <taxon>Syntrophobacteraceae</taxon>
        <taxon>Syntrophobacter</taxon>
    </lineage>
</organism>
<name>DNAJ_SYNFM</name>
<keyword id="KW-0143">Chaperone</keyword>
<keyword id="KW-0963">Cytoplasm</keyword>
<keyword id="KW-0235">DNA replication</keyword>
<keyword id="KW-0479">Metal-binding</keyword>
<keyword id="KW-1185">Reference proteome</keyword>
<keyword id="KW-0677">Repeat</keyword>
<keyword id="KW-0346">Stress response</keyword>
<keyword id="KW-0862">Zinc</keyword>
<keyword id="KW-0863">Zinc-finger</keyword>
<accession>A0LJ41</accession>
<gene>
    <name evidence="1" type="primary">dnaJ</name>
    <name type="ordered locus">Sfum_1756</name>
</gene>
<feature type="chain" id="PRO_1000085319" description="Chaperone protein DnaJ">
    <location>
        <begin position="1"/>
        <end position="384"/>
    </location>
</feature>
<feature type="domain" description="J" evidence="1">
    <location>
        <begin position="5"/>
        <end position="70"/>
    </location>
</feature>
<feature type="repeat" description="CXXCXGXG motif">
    <location>
        <begin position="147"/>
        <end position="154"/>
    </location>
</feature>
<feature type="repeat" description="CXXCXGXG motif">
    <location>
        <begin position="164"/>
        <end position="171"/>
    </location>
</feature>
<feature type="repeat" description="CXXCXGXG motif">
    <location>
        <begin position="186"/>
        <end position="193"/>
    </location>
</feature>
<feature type="repeat" description="CXXCXGXG motif">
    <location>
        <begin position="200"/>
        <end position="207"/>
    </location>
</feature>
<feature type="zinc finger region" description="CR-type" evidence="1">
    <location>
        <begin position="134"/>
        <end position="212"/>
    </location>
</feature>
<feature type="region of interest" description="Disordered" evidence="2">
    <location>
        <begin position="352"/>
        <end position="384"/>
    </location>
</feature>
<feature type="binding site" evidence="1">
    <location>
        <position position="147"/>
    </location>
    <ligand>
        <name>Zn(2+)</name>
        <dbReference type="ChEBI" id="CHEBI:29105"/>
        <label>1</label>
    </ligand>
</feature>
<feature type="binding site" evidence="1">
    <location>
        <position position="150"/>
    </location>
    <ligand>
        <name>Zn(2+)</name>
        <dbReference type="ChEBI" id="CHEBI:29105"/>
        <label>1</label>
    </ligand>
</feature>
<feature type="binding site" evidence="1">
    <location>
        <position position="164"/>
    </location>
    <ligand>
        <name>Zn(2+)</name>
        <dbReference type="ChEBI" id="CHEBI:29105"/>
        <label>2</label>
    </ligand>
</feature>
<feature type="binding site" evidence="1">
    <location>
        <position position="167"/>
    </location>
    <ligand>
        <name>Zn(2+)</name>
        <dbReference type="ChEBI" id="CHEBI:29105"/>
        <label>2</label>
    </ligand>
</feature>
<feature type="binding site" evidence="1">
    <location>
        <position position="186"/>
    </location>
    <ligand>
        <name>Zn(2+)</name>
        <dbReference type="ChEBI" id="CHEBI:29105"/>
        <label>2</label>
    </ligand>
</feature>
<feature type="binding site" evidence="1">
    <location>
        <position position="189"/>
    </location>
    <ligand>
        <name>Zn(2+)</name>
        <dbReference type="ChEBI" id="CHEBI:29105"/>
        <label>2</label>
    </ligand>
</feature>
<feature type="binding site" evidence="1">
    <location>
        <position position="200"/>
    </location>
    <ligand>
        <name>Zn(2+)</name>
        <dbReference type="ChEBI" id="CHEBI:29105"/>
        <label>1</label>
    </ligand>
</feature>
<feature type="binding site" evidence="1">
    <location>
        <position position="203"/>
    </location>
    <ligand>
        <name>Zn(2+)</name>
        <dbReference type="ChEBI" id="CHEBI:29105"/>
        <label>1</label>
    </ligand>
</feature>
<proteinExistence type="inferred from homology"/>